<evidence type="ECO:0000255" key="1">
    <source>
        <dbReference type="HAMAP-Rule" id="MF_00658"/>
    </source>
</evidence>
<dbReference type="EC" id="2.1.1.177" evidence="1"/>
<dbReference type="EMBL" id="CP000512">
    <property type="protein sequence ID" value="ABM33761.1"/>
    <property type="molecule type" value="Genomic_DNA"/>
</dbReference>
<dbReference type="RefSeq" id="WP_011796269.1">
    <property type="nucleotide sequence ID" value="NC_008752.1"/>
</dbReference>
<dbReference type="SMR" id="A1TS23"/>
<dbReference type="STRING" id="397945.Aave_3199"/>
<dbReference type="GeneID" id="79792889"/>
<dbReference type="KEGG" id="aav:Aave_3199"/>
<dbReference type="eggNOG" id="COG1576">
    <property type="taxonomic scope" value="Bacteria"/>
</dbReference>
<dbReference type="HOGENOM" id="CLU_100552_1_0_4"/>
<dbReference type="OrthoDB" id="9806643at2"/>
<dbReference type="Proteomes" id="UP000002596">
    <property type="component" value="Chromosome"/>
</dbReference>
<dbReference type="GO" id="GO:0005737">
    <property type="term" value="C:cytoplasm"/>
    <property type="evidence" value="ECO:0007669"/>
    <property type="project" value="UniProtKB-SubCell"/>
</dbReference>
<dbReference type="GO" id="GO:0070038">
    <property type="term" value="F:rRNA (pseudouridine-N3-)-methyltransferase activity"/>
    <property type="evidence" value="ECO:0007669"/>
    <property type="project" value="UniProtKB-UniRule"/>
</dbReference>
<dbReference type="CDD" id="cd18081">
    <property type="entry name" value="RlmH-like"/>
    <property type="match status" value="1"/>
</dbReference>
<dbReference type="Gene3D" id="3.40.1280.10">
    <property type="match status" value="1"/>
</dbReference>
<dbReference type="HAMAP" id="MF_00658">
    <property type="entry name" value="23SrRNA_methyltr_H"/>
    <property type="match status" value="1"/>
</dbReference>
<dbReference type="InterPro" id="IPR029028">
    <property type="entry name" value="Alpha/beta_knot_MTases"/>
</dbReference>
<dbReference type="InterPro" id="IPR003742">
    <property type="entry name" value="RlmH-like"/>
</dbReference>
<dbReference type="InterPro" id="IPR029026">
    <property type="entry name" value="tRNA_m1G_MTases_N"/>
</dbReference>
<dbReference type="NCBIfam" id="NF000986">
    <property type="entry name" value="PRK00103.1-4"/>
    <property type="match status" value="1"/>
</dbReference>
<dbReference type="PANTHER" id="PTHR33603">
    <property type="entry name" value="METHYLTRANSFERASE"/>
    <property type="match status" value="1"/>
</dbReference>
<dbReference type="PANTHER" id="PTHR33603:SF1">
    <property type="entry name" value="RIBOSOMAL RNA LARGE SUBUNIT METHYLTRANSFERASE H"/>
    <property type="match status" value="1"/>
</dbReference>
<dbReference type="Pfam" id="PF02590">
    <property type="entry name" value="SPOUT_MTase"/>
    <property type="match status" value="1"/>
</dbReference>
<dbReference type="PIRSF" id="PIRSF004505">
    <property type="entry name" value="MT_bac"/>
    <property type="match status" value="1"/>
</dbReference>
<dbReference type="SUPFAM" id="SSF75217">
    <property type="entry name" value="alpha/beta knot"/>
    <property type="match status" value="1"/>
</dbReference>
<gene>
    <name evidence="1" type="primary">rlmH</name>
    <name type="ordered locus">Aave_3199</name>
</gene>
<protein>
    <recommendedName>
        <fullName evidence="1">Ribosomal RNA large subunit methyltransferase H</fullName>
        <ecNumber evidence="1">2.1.1.177</ecNumber>
    </recommendedName>
    <alternativeName>
        <fullName evidence="1">23S rRNA (pseudouridine1915-N3)-methyltransferase</fullName>
    </alternativeName>
    <alternativeName>
        <fullName evidence="1">23S rRNA m3Psi1915 methyltransferase</fullName>
    </alternativeName>
    <alternativeName>
        <fullName evidence="1">rRNA (pseudouridine-N3-)-methyltransferase RlmH</fullName>
    </alternativeName>
</protein>
<accession>A1TS23</accession>
<feature type="chain" id="PRO_1000061748" description="Ribosomal RNA large subunit methyltransferase H">
    <location>
        <begin position="1"/>
        <end position="155"/>
    </location>
</feature>
<feature type="binding site" evidence="1">
    <location>
        <position position="72"/>
    </location>
    <ligand>
        <name>S-adenosyl-L-methionine</name>
        <dbReference type="ChEBI" id="CHEBI:59789"/>
    </ligand>
</feature>
<feature type="binding site" evidence="1">
    <location>
        <position position="103"/>
    </location>
    <ligand>
        <name>S-adenosyl-L-methionine</name>
        <dbReference type="ChEBI" id="CHEBI:59789"/>
    </ligand>
</feature>
<feature type="binding site" evidence="1">
    <location>
        <begin position="122"/>
        <end position="127"/>
    </location>
    <ligand>
        <name>S-adenosyl-L-methionine</name>
        <dbReference type="ChEBI" id="CHEBI:59789"/>
    </ligand>
</feature>
<keyword id="KW-0963">Cytoplasm</keyword>
<keyword id="KW-0489">Methyltransferase</keyword>
<keyword id="KW-0698">rRNA processing</keyword>
<keyword id="KW-0949">S-adenosyl-L-methionine</keyword>
<keyword id="KW-0808">Transferase</keyword>
<reference key="1">
    <citation type="submission" date="2006-12" db="EMBL/GenBank/DDBJ databases">
        <title>Complete sequence of Acidovorax avenae subsp. citrulli AAC00-1.</title>
        <authorList>
            <person name="Copeland A."/>
            <person name="Lucas S."/>
            <person name="Lapidus A."/>
            <person name="Barry K."/>
            <person name="Detter J.C."/>
            <person name="Glavina del Rio T."/>
            <person name="Dalin E."/>
            <person name="Tice H."/>
            <person name="Pitluck S."/>
            <person name="Kiss H."/>
            <person name="Brettin T."/>
            <person name="Bruce D."/>
            <person name="Han C."/>
            <person name="Tapia R."/>
            <person name="Gilna P."/>
            <person name="Schmutz J."/>
            <person name="Larimer F."/>
            <person name="Land M."/>
            <person name="Hauser L."/>
            <person name="Kyrpides N."/>
            <person name="Kim E."/>
            <person name="Stahl D."/>
            <person name="Richardson P."/>
        </authorList>
    </citation>
    <scope>NUCLEOTIDE SEQUENCE [LARGE SCALE GENOMIC DNA]</scope>
    <source>
        <strain>AAC00-1</strain>
    </source>
</reference>
<proteinExistence type="inferred from homology"/>
<sequence>MKLLIVAVGQRVPDWAQTAYEDYAKRFPPELKVELKAVKTEPRGSKTLETLYAAERERIEAAIPRGTRVVALDERGTSLTTKALAARLKDWQLGGDDVALVIGGPDGLDPAFRQAAHERIRLSDLTLPHAMVRVLLIEQLYRAWSVNAGHPYHRE</sequence>
<comment type="function">
    <text evidence="1">Specifically methylates the pseudouridine at position 1915 (m3Psi1915) in 23S rRNA.</text>
</comment>
<comment type="catalytic activity">
    <reaction evidence="1">
        <text>pseudouridine(1915) in 23S rRNA + S-adenosyl-L-methionine = N(3)-methylpseudouridine(1915) in 23S rRNA + S-adenosyl-L-homocysteine + H(+)</text>
        <dbReference type="Rhea" id="RHEA:42752"/>
        <dbReference type="Rhea" id="RHEA-COMP:10221"/>
        <dbReference type="Rhea" id="RHEA-COMP:10222"/>
        <dbReference type="ChEBI" id="CHEBI:15378"/>
        <dbReference type="ChEBI" id="CHEBI:57856"/>
        <dbReference type="ChEBI" id="CHEBI:59789"/>
        <dbReference type="ChEBI" id="CHEBI:65314"/>
        <dbReference type="ChEBI" id="CHEBI:74486"/>
        <dbReference type="EC" id="2.1.1.177"/>
    </reaction>
</comment>
<comment type="subunit">
    <text evidence="1">Homodimer.</text>
</comment>
<comment type="subcellular location">
    <subcellularLocation>
        <location evidence="1">Cytoplasm</location>
    </subcellularLocation>
</comment>
<comment type="similarity">
    <text evidence="1">Belongs to the RNA methyltransferase RlmH family.</text>
</comment>
<organism>
    <name type="scientific">Paracidovorax citrulli (strain AAC00-1)</name>
    <name type="common">Acidovorax citrulli</name>
    <dbReference type="NCBI Taxonomy" id="397945"/>
    <lineage>
        <taxon>Bacteria</taxon>
        <taxon>Pseudomonadati</taxon>
        <taxon>Pseudomonadota</taxon>
        <taxon>Betaproteobacteria</taxon>
        <taxon>Burkholderiales</taxon>
        <taxon>Comamonadaceae</taxon>
        <taxon>Paracidovorax</taxon>
    </lineage>
</organism>
<name>RLMH_PARC0</name>